<proteinExistence type="evidence at transcript level"/>
<evidence type="ECO:0000256" key="1">
    <source>
        <dbReference type="SAM" id="MobiDB-lite"/>
    </source>
</evidence>
<evidence type="ECO:0000269" key="2">
    <source>
    </source>
</evidence>
<evidence type="ECO:0000303" key="3">
    <source>
    </source>
</evidence>
<evidence type="ECO:0000305" key="4"/>
<evidence type="ECO:0000305" key="5">
    <source>
    </source>
</evidence>
<comment type="function">
    <text evidence="2 5">An outer membrane protein that may participate in pathogenesis. Some human Lyme disease patients have antibodies against this protein (PubMed:10948116). The Mlp proteins probably undergo intragenic recombination, generating new alleles (Probable).</text>
</comment>
<comment type="subcellular location">
    <subcellularLocation>
        <location evidence="5">Cell outer membrane</location>
        <topology evidence="5">Lipid-anchor</topology>
    </subcellularLocation>
</comment>
<comment type="induction">
    <text evidence="2">Weakly induced when grown at 35 degrees Celsius.</text>
</comment>
<comment type="similarity">
    <text evidence="4">Belongs to the Multicopy lipoprotein (Mlp) family.</text>
</comment>
<dbReference type="EMBL" id="AE001581">
    <property type="protein sequence ID" value="AAF07670.1"/>
    <property type="molecule type" value="Genomic_DNA"/>
</dbReference>
<dbReference type="RefSeq" id="NP_051441.1">
    <property type="nucleotide sequence ID" value="NC_000954.1"/>
</dbReference>
<dbReference type="RefSeq" id="WP_010883879.1">
    <property type="nucleotide sequence ID" value="NC_000954.1"/>
</dbReference>
<dbReference type="SMR" id="Q9S043"/>
<dbReference type="EnsemblBacteria" id="AAF07670">
    <property type="protein sequence ID" value="AAF07670"/>
    <property type="gene ID" value="BB_N28"/>
</dbReference>
<dbReference type="KEGG" id="bbu:BB_N28"/>
<dbReference type="PATRIC" id="fig|224326.49.peg.288"/>
<dbReference type="HOGENOM" id="CLU_134260_0_0_12"/>
<dbReference type="OrthoDB" id="351076at2"/>
<dbReference type="Proteomes" id="UP000001807">
    <property type="component" value="Plasmid cp32-9"/>
</dbReference>
<dbReference type="GO" id="GO:0009279">
    <property type="term" value="C:cell outer membrane"/>
    <property type="evidence" value="ECO:0007669"/>
    <property type="project" value="UniProtKB-SubCell"/>
</dbReference>
<dbReference type="InterPro" id="IPR004983">
    <property type="entry name" value="Mlp"/>
</dbReference>
<dbReference type="Pfam" id="PF03304">
    <property type="entry name" value="Mlp"/>
    <property type="match status" value="1"/>
</dbReference>
<feature type="signal peptide" evidence="4">
    <location>
        <begin position="1"/>
        <end position="17"/>
    </location>
</feature>
<feature type="chain" id="PRO_5004331813" description="Lipoprotein MlpI" evidence="4">
    <location>
        <begin position="18"/>
        <end position="142"/>
    </location>
</feature>
<feature type="region of interest" description="Disordered" evidence="1">
    <location>
        <begin position="22"/>
        <end position="54"/>
    </location>
</feature>
<feature type="compositionally biased region" description="Basic and acidic residues" evidence="1">
    <location>
        <begin position="33"/>
        <end position="54"/>
    </location>
</feature>
<feature type="lipid moiety-binding region" description="N-palmitoyl cysteine" evidence="4">
    <location>
        <position position="18"/>
    </location>
</feature>
<feature type="lipid moiety-binding region" description="S-diacylglycerol cysteine" evidence="4">
    <location>
        <position position="18"/>
    </location>
</feature>
<accession>Q9S043</accession>
<organism>
    <name type="scientific">Borreliella burgdorferi (strain ATCC 35210 / DSM 4680 / CIP 102532 / B31)</name>
    <name type="common">Borrelia burgdorferi</name>
    <dbReference type="NCBI Taxonomy" id="224326"/>
    <lineage>
        <taxon>Bacteria</taxon>
        <taxon>Pseudomonadati</taxon>
        <taxon>Spirochaetota</taxon>
        <taxon>Spirochaetia</taxon>
        <taxon>Spirochaetales</taxon>
        <taxon>Borreliaceae</taxon>
        <taxon>Borreliella</taxon>
    </lineage>
</organism>
<protein>
    <recommendedName>
        <fullName evidence="3">Lipoprotein MlpI</fullName>
    </recommendedName>
</protein>
<reference key="1">
    <citation type="journal article" date="1997" name="Nature">
        <title>Genomic sequence of a Lyme disease spirochaete, Borrelia burgdorferi.</title>
        <authorList>
            <person name="Fraser C.M."/>
            <person name="Casjens S."/>
            <person name="Huang W.M."/>
            <person name="Sutton G.G."/>
            <person name="Clayton R.A."/>
            <person name="Lathigra R."/>
            <person name="White O."/>
            <person name="Ketchum K.A."/>
            <person name="Dodson R.J."/>
            <person name="Hickey E.K."/>
            <person name="Gwinn M.L."/>
            <person name="Dougherty B.A."/>
            <person name="Tomb J.-F."/>
            <person name="Fleischmann R.D."/>
            <person name="Richardson D.L."/>
            <person name="Peterson J.D."/>
            <person name="Kerlavage A.R."/>
            <person name="Quackenbush J."/>
            <person name="Salzberg S.L."/>
            <person name="Hanson M."/>
            <person name="van Vugt R."/>
            <person name="Palmer N."/>
            <person name="Adams M.D."/>
            <person name="Gocayne J.D."/>
            <person name="Weidman J.F."/>
            <person name="Utterback T.R."/>
            <person name="Watthey L."/>
            <person name="McDonald L.A."/>
            <person name="Artiach P."/>
            <person name="Bowman C."/>
            <person name="Garland S.A."/>
            <person name="Fujii C."/>
            <person name="Cotton M.D."/>
            <person name="Horst K."/>
            <person name="Roberts K.M."/>
            <person name="Hatch B."/>
            <person name="Smith H.O."/>
            <person name="Venter J.C."/>
        </authorList>
    </citation>
    <scope>NUCLEOTIDE SEQUENCE [LARGE SCALE GENOMIC DNA]</scope>
    <source>
        <strain>ATCC 35210 / DSM 4680 / CIP 102532 / B31</strain>
    </source>
</reference>
<reference key="2">
    <citation type="journal article" date="2000" name="Mol. Microbiol.">
        <title>A bacterial genome in flux: the twelve linear and nine circular extrachromosomal DNAs in an infectious isolate of the Lyme disease spirochete Borrelia burgdorferi.</title>
        <authorList>
            <person name="Casjens S."/>
            <person name="Palmer N."/>
            <person name="van Vugt R."/>
            <person name="Huang W.M."/>
            <person name="Stevenson B."/>
            <person name="Rosa P."/>
            <person name="Lathigra R."/>
            <person name="Sutton G.G."/>
            <person name="Peterson J.D."/>
            <person name="Dodson R.J."/>
            <person name="Haft D.H."/>
            <person name="Hickey E.K."/>
            <person name="Gwinn M.L."/>
            <person name="White O."/>
            <person name="Fraser C.M."/>
        </authorList>
    </citation>
    <scope>NUCLEOTIDE SEQUENCE [LARGE SCALE GENOMIC DNA]</scope>
    <source>
        <strain>ATCC 35210 / DSM 4680 / CIP 102532 / B31</strain>
    </source>
</reference>
<reference key="3">
    <citation type="journal article" date="2000" name="Infect. Immun.">
        <title>Expression and immunological analysis of the plasmid-borne mlp genes of Borrelia burgdorferi strain B31.</title>
        <authorList>
            <person name="Porcella S.F."/>
            <person name="Fitzpatrick C.A."/>
            <person name="Bono J.L."/>
        </authorList>
    </citation>
    <scope>FUNCTION</scope>
    <scope>ANTIGENICITY</scope>
    <scope>SUBCELLULAR LOCATION</scope>
    <scope>INDUCTION AT 35 DEGREES CELSIUS</scope>
    <source>
        <strain>B31-4A</strain>
        <plasmid>cp32-9</plasmid>
    </source>
</reference>
<geneLocation type="plasmid">
    <name>cp32-9</name>
</geneLocation>
<keyword id="KW-0998">Cell outer membrane</keyword>
<keyword id="KW-0449">Lipoprotein</keyword>
<keyword id="KW-0472">Membrane</keyword>
<keyword id="KW-0564">Palmitate</keyword>
<keyword id="KW-0614">Plasmid</keyword>
<keyword id="KW-1185">Reference proteome</keyword>
<keyword id="KW-0732">Signal</keyword>
<name>MLPI_BORBU</name>
<sequence length="142" mass="15825">MKIINILFCLFLLMLNSCNSNDTNTSQTKSRQKRDLTQKEATQEKPKSKEDLLREKLSEDQKTHLDWLKTALTGAGEFDKFLGYDEDKIKGALNHIKSELDKCTGDNSEQQKSTFKEVVKGALGGGIDSFATSASSTCQAQQ</sequence>
<gene>
    <name evidence="3" type="primary">mlpI</name>
    <name type="ordered locus">BB_N28</name>
</gene>